<comment type="function">
    <text evidence="1">Catalyzes the GTP-dependent ribosomal translocation step during translation elongation. During this step, the ribosome changes from the pre-translocational (PRE) to the post-translocational (POST) state as the newly formed A-site-bound peptidyl-tRNA and P-site-bound deacylated tRNA move to the P and E sites, respectively. Catalyzes the coordinated movement of the two tRNA molecules, the mRNA and conformational changes in the ribosome.</text>
</comment>
<comment type="subcellular location">
    <subcellularLocation>
        <location evidence="1">Cytoplasm</location>
    </subcellularLocation>
</comment>
<comment type="similarity">
    <text evidence="1">Belongs to the TRAFAC class translation factor GTPase superfamily. Classic translation factor GTPase family. EF-G/EF-2 subfamily.</text>
</comment>
<reference key="1">
    <citation type="submission" date="2006-03" db="EMBL/GenBank/DDBJ databases">
        <title>Complete sequence of Shewanella denitrificans OS217.</title>
        <authorList>
            <consortium name="US DOE Joint Genome Institute"/>
            <person name="Copeland A."/>
            <person name="Lucas S."/>
            <person name="Lapidus A."/>
            <person name="Barry K."/>
            <person name="Detter J.C."/>
            <person name="Glavina del Rio T."/>
            <person name="Hammon N."/>
            <person name="Israni S."/>
            <person name="Dalin E."/>
            <person name="Tice H."/>
            <person name="Pitluck S."/>
            <person name="Brettin T."/>
            <person name="Bruce D."/>
            <person name="Han C."/>
            <person name="Tapia R."/>
            <person name="Gilna P."/>
            <person name="Kiss H."/>
            <person name="Schmutz J."/>
            <person name="Larimer F."/>
            <person name="Land M."/>
            <person name="Hauser L."/>
            <person name="Kyrpides N."/>
            <person name="Lykidis A."/>
            <person name="Richardson P."/>
        </authorList>
    </citation>
    <scope>NUCLEOTIDE SEQUENCE [LARGE SCALE GENOMIC DNA]</scope>
    <source>
        <strain>OS217 / ATCC BAA-1090 / DSM 15013</strain>
    </source>
</reference>
<name>EFG1_SHEDO</name>
<organism>
    <name type="scientific">Shewanella denitrificans (strain OS217 / ATCC BAA-1090 / DSM 15013)</name>
    <dbReference type="NCBI Taxonomy" id="318161"/>
    <lineage>
        <taxon>Bacteria</taxon>
        <taxon>Pseudomonadati</taxon>
        <taxon>Pseudomonadota</taxon>
        <taxon>Gammaproteobacteria</taxon>
        <taxon>Alteromonadales</taxon>
        <taxon>Shewanellaceae</taxon>
        <taxon>Shewanella</taxon>
    </lineage>
</organism>
<proteinExistence type="inferred from homology"/>
<protein>
    <recommendedName>
        <fullName evidence="1">Elongation factor G 1</fullName>
        <shortName evidence="1">EF-G 1</shortName>
    </recommendedName>
</protein>
<accession>Q12SW2</accession>
<feature type="chain" id="PRO_0000263503" description="Elongation factor G 1">
    <location>
        <begin position="1"/>
        <end position="698"/>
    </location>
</feature>
<feature type="domain" description="tr-type G">
    <location>
        <begin position="8"/>
        <end position="290"/>
    </location>
</feature>
<feature type="binding site" evidence="1">
    <location>
        <begin position="17"/>
        <end position="24"/>
    </location>
    <ligand>
        <name>GTP</name>
        <dbReference type="ChEBI" id="CHEBI:37565"/>
    </ligand>
</feature>
<feature type="binding site" evidence="1">
    <location>
        <begin position="88"/>
        <end position="92"/>
    </location>
    <ligand>
        <name>GTP</name>
        <dbReference type="ChEBI" id="CHEBI:37565"/>
    </ligand>
</feature>
<feature type="binding site" evidence="1">
    <location>
        <begin position="142"/>
        <end position="145"/>
    </location>
    <ligand>
        <name>GTP</name>
        <dbReference type="ChEBI" id="CHEBI:37565"/>
    </ligand>
</feature>
<gene>
    <name evidence="1" type="primary">fusA1</name>
    <name type="ordered locus">Sden_0167</name>
</gene>
<evidence type="ECO:0000255" key="1">
    <source>
        <dbReference type="HAMAP-Rule" id="MF_00054"/>
    </source>
</evidence>
<dbReference type="EMBL" id="CP000302">
    <property type="protein sequence ID" value="ABE53464.1"/>
    <property type="molecule type" value="Genomic_DNA"/>
</dbReference>
<dbReference type="RefSeq" id="WP_011494633.1">
    <property type="nucleotide sequence ID" value="NC_007954.1"/>
</dbReference>
<dbReference type="SMR" id="Q12SW2"/>
<dbReference type="STRING" id="318161.Sden_0167"/>
<dbReference type="KEGG" id="sdn:Sden_0167"/>
<dbReference type="eggNOG" id="COG0480">
    <property type="taxonomic scope" value="Bacteria"/>
</dbReference>
<dbReference type="HOGENOM" id="CLU_002794_4_1_6"/>
<dbReference type="OrthoDB" id="9804431at2"/>
<dbReference type="Proteomes" id="UP000001982">
    <property type="component" value="Chromosome"/>
</dbReference>
<dbReference type="GO" id="GO:0005737">
    <property type="term" value="C:cytoplasm"/>
    <property type="evidence" value="ECO:0007669"/>
    <property type="project" value="UniProtKB-SubCell"/>
</dbReference>
<dbReference type="GO" id="GO:0005525">
    <property type="term" value="F:GTP binding"/>
    <property type="evidence" value="ECO:0007669"/>
    <property type="project" value="UniProtKB-UniRule"/>
</dbReference>
<dbReference type="GO" id="GO:0003924">
    <property type="term" value="F:GTPase activity"/>
    <property type="evidence" value="ECO:0007669"/>
    <property type="project" value="InterPro"/>
</dbReference>
<dbReference type="GO" id="GO:0097216">
    <property type="term" value="F:guanosine tetraphosphate binding"/>
    <property type="evidence" value="ECO:0007669"/>
    <property type="project" value="UniProtKB-ARBA"/>
</dbReference>
<dbReference type="GO" id="GO:0003746">
    <property type="term" value="F:translation elongation factor activity"/>
    <property type="evidence" value="ECO:0007669"/>
    <property type="project" value="UniProtKB-UniRule"/>
</dbReference>
<dbReference type="GO" id="GO:0032790">
    <property type="term" value="P:ribosome disassembly"/>
    <property type="evidence" value="ECO:0007669"/>
    <property type="project" value="TreeGrafter"/>
</dbReference>
<dbReference type="CDD" id="cd01886">
    <property type="entry name" value="EF-G"/>
    <property type="match status" value="1"/>
</dbReference>
<dbReference type="CDD" id="cd16262">
    <property type="entry name" value="EFG_III"/>
    <property type="match status" value="1"/>
</dbReference>
<dbReference type="CDD" id="cd01434">
    <property type="entry name" value="EFG_mtEFG1_IV"/>
    <property type="match status" value="1"/>
</dbReference>
<dbReference type="CDD" id="cd03713">
    <property type="entry name" value="EFG_mtEFG_C"/>
    <property type="match status" value="1"/>
</dbReference>
<dbReference type="CDD" id="cd04088">
    <property type="entry name" value="EFG_mtEFG_II"/>
    <property type="match status" value="1"/>
</dbReference>
<dbReference type="FunFam" id="2.40.30.10:FF:000006">
    <property type="entry name" value="Elongation factor G"/>
    <property type="match status" value="1"/>
</dbReference>
<dbReference type="FunFam" id="3.30.230.10:FF:000003">
    <property type="entry name" value="Elongation factor G"/>
    <property type="match status" value="1"/>
</dbReference>
<dbReference type="FunFam" id="3.30.70.240:FF:000001">
    <property type="entry name" value="Elongation factor G"/>
    <property type="match status" value="1"/>
</dbReference>
<dbReference type="FunFam" id="3.30.70.870:FF:000001">
    <property type="entry name" value="Elongation factor G"/>
    <property type="match status" value="1"/>
</dbReference>
<dbReference type="FunFam" id="3.40.50.300:FF:000029">
    <property type="entry name" value="Elongation factor G"/>
    <property type="match status" value="1"/>
</dbReference>
<dbReference type="Gene3D" id="3.30.230.10">
    <property type="match status" value="1"/>
</dbReference>
<dbReference type="Gene3D" id="3.30.70.240">
    <property type="match status" value="1"/>
</dbReference>
<dbReference type="Gene3D" id="3.30.70.870">
    <property type="entry name" value="Elongation Factor G (Translational Gtpase), domain 3"/>
    <property type="match status" value="1"/>
</dbReference>
<dbReference type="Gene3D" id="3.40.50.300">
    <property type="entry name" value="P-loop containing nucleotide triphosphate hydrolases"/>
    <property type="match status" value="1"/>
</dbReference>
<dbReference type="Gene3D" id="2.40.30.10">
    <property type="entry name" value="Translation factors"/>
    <property type="match status" value="1"/>
</dbReference>
<dbReference type="HAMAP" id="MF_00054_B">
    <property type="entry name" value="EF_G_EF_2_B"/>
    <property type="match status" value="1"/>
</dbReference>
<dbReference type="InterPro" id="IPR041095">
    <property type="entry name" value="EFG_II"/>
</dbReference>
<dbReference type="InterPro" id="IPR009022">
    <property type="entry name" value="EFG_III"/>
</dbReference>
<dbReference type="InterPro" id="IPR035647">
    <property type="entry name" value="EFG_III/V"/>
</dbReference>
<dbReference type="InterPro" id="IPR047872">
    <property type="entry name" value="EFG_IV"/>
</dbReference>
<dbReference type="InterPro" id="IPR035649">
    <property type="entry name" value="EFG_V"/>
</dbReference>
<dbReference type="InterPro" id="IPR000640">
    <property type="entry name" value="EFG_V-like"/>
</dbReference>
<dbReference type="InterPro" id="IPR004161">
    <property type="entry name" value="EFTu-like_2"/>
</dbReference>
<dbReference type="InterPro" id="IPR031157">
    <property type="entry name" value="G_TR_CS"/>
</dbReference>
<dbReference type="InterPro" id="IPR027417">
    <property type="entry name" value="P-loop_NTPase"/>
</dbReference>
<dbReference type="InterPro" id="IPR020568">
    <property type="entry name" value="Ribosomal_Su5_D2-typ_SF"/>
</dbReference>
<dbReference type="InterPro" id="IPR014721">
    <property type="entry name" value="Ribsml_uS5_D2-typ_fold_subgr"/>
</dbReference>
<dbReference type="InterPro" id="IPR005225">
    <property type="entry name" value="Small_GTP-bd"/>
</dbReference>
<dbReference type="InterPro" id="IPR000795">
    <property type="entry name" value="T_Tr_GTP-bd_dom"/>
</dbReference>
<dbReference type="InterPro" id="IPR009000">
    <property type="entry name" value="Transl_B-barrel_sf"/>
</dbReference>
<dbReference type="InterPro" id="IPR004540">
    <property type="entry name" value="Transl_elong_EFG/EF2"/>
</dbReference>
<dbReference type="InterPro" id="IPR005517">
    <property type="entry name" value="Transl_elong_EFG/EF2_IV"/>
</dbReference>
<dbReference type="NCBIfam" id="TIGR00484">
    <property type="entry name" value="EF-G"/>
    <property type="match status" value="1"/>
</dbReference>
<dbReference type="NCBIfam" id="NF009381">
    <property type="entry name" value="PRK12740.1-5"/>
    <property type="match status" value="1"/>
</dbReference>
<dbReference type="NCBIfam" id="TIGR00231">
    <property type="entry name" value="small_GTP"/>
    <property type="match status" value="1"/>
</dbReference>
<dbReference type="PANTHER" id="PTHR43261:SF1">
    <property type="entry name" value="RIBOSOME-RELEASING FACTOR 2, MITOCHONDRIAL"/>
    <property type="match status" value="1"/>
</dbReference>
<dbReference type="PANTHER" id="PTHR43261">
    <property type="entry name" value="TRANSLATION ELONGATION FACTOR G-RELATED"/>
    <property type="match status" value="1"/>
</dbReference>
<dbReference type="Pfam" id="PF00679">
    <property type="entry name" value="EFG_C"/>
    <property type="match status" value="1"/>
</dbReference>
<dbReference type="Pfam" id="PF14492">
    <property type="entry name" value="EFG_III"/>
    <property type="match status" value="1"/>
</dbReference>
<dbReference type="Pfam" id="PF03764">
    <property type="entry name" value="EFG_IV"/>
    <property type="match status" value="1"/>
</dbReference>
<dbReference type="Pfam" id="PF00009">
    <property type="entry name" value="GTP_EFTU"/>
    <property type="match status" value="1"/>
</dbReference>
<dbReference type="Pfam" id="PF03144">
    <property type="entry name" value="GTP_EFTU_D2"/>
    <property type="match status" value="1"/>
</dbReference>
<dbReference type="PRINTS" id="PR00315">
    <property type="entry name" value="ELONGATNFCT"/>
</dbReference>
<dbReference type="SMART" id="SM00838">
    <property type="entry name" value="EFG_C"/>
    <property type="match status" value="1"/>
</dbReference>
<dbReference type="SMART" id="SM00889">
    <property type="entry name" value="EFG_IV"/>
    <property type="match status" value="1"/>
</dbReference>
<dbReference type="SUPFAM" id="SSF54980">
    <property type="entry name" value="EF-G C-terminal domain-like"/>
    <property type="match status" value="2"/>
</dbReference>
<dbReference type="SUPFAM" id="SSF52540">
    <property type="entry name" value="P-loop containing nucleoside triphosphate hydrolases"/>
    <property type="match status" value="1"/>
</dbReference>
<dbReference type="SUPFAM" id="SSF54211">
    <property type="entry name" value="Ribosomal protein S5 domain 2-like"/>
    <property type="match status" value="1"/>
</dbReference>
<dbReference type="SUPFAM" id="SSF50447">
    <property type="entry name" value="Translation proteins"/>
    <property type="match status" value="1"/>
</dbReference>
<dbReference type="PROSITE" id="PS00301">
    <property type="entry name" value="G_TR_1"/>
    <property type="match status" value="1"/>
</dbReference>
<dbReference type="PROSITE" id="PS51722">
    <property type="entry name" value="G_TR_2"/>
    <property type="match status" value="1"/>
</dbReference>
<keyword id="KW-0963">Cytoplasm</keyword>
<keyword id="KW-0251">Elongation factor</keyword>
<keyword id="KW-0342">GTP-binding</keyword>
<keyword id="KW-0547">Nucleotide-binding</keyword>
<keyword id="KW-0648">Protein biosynthesis</keyword>
<keyword id="KW-1185">Reference proteome</keyword>
<sequence>MARTTPIERYRNIGIVAHVDAGKTTTTERVLFYTGLSHKIGEVHDGAATTDWMVQEQERGITITSAAVTTFWRGMDAQFTEHRINIIDTPGHVDFTIEVERSLRVLDGAVVVFCGSSGVEPQSETVWRQADKYRVPRMVFVNKMDRAGANFDRVVDQIRTRLGATCVPIQMNIGAEEEFKGVIDLIKMKAINWSEEDQGMTFSYEEIPAHLAAKAAEMHEYLVEAAAEASEELMDKYLETGNLSELEIKQALRQRTIDNEIVLATCGSAFKNKGVQAVLDAVVDYLPAPIDVPAIKGIDEHDAEVERPSDDNAPFAALAFKIATDPFVGTLTFIRVYSGVLQSGSGVYNSVKEKRERVGRIVQMHANDRTELKEVRAGDIAAAIGLKDVTTGDTLCDNDHRVILERMEFPEPVITIAVEPRSQADQDKMAIALQKLAAEDPSFRVETDEDSAQTLISGMGELHLDIIVDRMRREFGVECNVGKPQVSYRETIRSTVEVEGKFVRQSGGRGQFGHVWLRLEPLEEGAGYEFVNEVVGGVIPREYIPAVDKGIQEQMKNGVLASFPVLDVKVTLFDGSYHDVDSNEMAFKIAGSMGFKKGALLANPSLLEPCMKVEVTTPADYMGDVVGDLNRRRGLIDGMDDGIGGVKLIHAVVPLAEMFGYATDLRSATQGRASYSMEFLKYSDAPQNIAKAIIESRS</sequence>